<name>AB46G_ORYSJ</name>
<gene>
    <name evidence="6" type="primary">ABCG46</name>
    <name evidence="5" type="synonym">PDR21</name>
    <name evidence="8" type="ordered locus">Os09g0332360</name>
    <name type="ordered locus">LOC_Os09g16290</name>
    <name evidence="9" type="ORF">OsJ_28924</name>
</gene>
<dbReference type="EMBL" id="AP008215">
    <property type="protein sequence ID" value="BAH94510.1"/>
    <property type="status" value="ALT_SEQ"/>
    <property type="molecule type" value="Genomic_DNA"/>
</dbReference>
<dbReference type="EMBL" id="AP014965">
    <property type="status" value="NOT_ANNOTATED_CDS"/>
    <property type="molecule type" value="Genomic_DNA"/>
</dbReference>
<dbReference type="EMBL" id="CM000146">
    <property type="protein sequence ID" value="EEE69493.1"/>
    <property type="status" value="ALT_SEQ"/>
    <property type="molecule type" value="Genomic_DNA"/>
</dbReference>
<dbReference type="SMR" id="C7J6G6"/>
<dbReference type="FunCoup" id="C7J6G6">
    <property type="interactions" value="61"/>
</dbReference>
<dbReference type="STRING" id="39947.C7J6G6"/>
<dbReference type="PaxDb" id="39947-C7J6G6"/>
<dbReference type="KEGG" id="dosa:Os09g0332360"/>
<dbReference type="eggNOG" id="KOG0065">
    <property type="taxonomic scope" value="Eukaryota"/>
</dbReference>
<dbReference type="InParanoid" id="C7J6G6"/>
<dbReference type="Proteomes" id="UP000000763">
    <property type="component" value="Chromosome 9"/>
</dbReference>
<dbReference type="Proteomes" id="UP000007752">
    <property type="component" value="Chromosome 9"/>
</dbReference>
<dbReference type="Proteomes" id="UP000059680">
    <property type="component" value="Chromosome 9"/>
</dbReference>
<dbReference type="GO" id="GO:0016020">
    <property type="term" value="C:membrane"/>
    <property type="evidence" value="ECO:0007669"/>
    <property type="project" value="UniProtKB-SubCell"/>
</dbReference>
<dbReference type="GO" id="GO:0140359">
    <property type="term" value="F:ABC-type transporter activity"/>
    <property type="evidence" value="ECO:0007669"/>
    <property type="project" value="InterPro"/>
</dbReference>
<dbReference type="GO" id="GO:0005524">
    <property type="term" value="F:ATP binding"/>
    <property type="evidence" value="ECO:0007669"/>
    <property type="project" value="UniProtKB-KW"/>
</dbReference>
<dbReference type="GO" id="GO:0016887">
    <property type="term" value="F:ATP hydrolysis activity"/>
    <property type="evidence" value="ECO:0007669"/>
    <property type="project" value="InterPro"/>
</dbReference>
<dbReference type="CDD" id="cd03232">
    <property type="entry name" value="ABCG_PDR_domain2"/>
    <property type="match status" value="1"/>
</dbReference>
<dbReference type="FunFam" id="3.40.50.300:FF:000532">
    <property type="entry name" value="ABC transporter G family member 34"/>
    <property type="match status" value="1"/>
</dbReference>
<dbReference type="FunFam" id="3.40.50.300:FF:000059">
    <property type="entry name" value="ABC transporter G family member 40"/>
    <property type="match status" value="1"/>
</dbReference>
<dbReference type="Gene3D" id="3.40.50.300">
    <property type="entry name" value="P-loop containing nucleotide triphosphate hydrolases"/>
    <property type="match status" value="2"/>
</dbReference>
<dbReference type="InterPro" id="IPR003593">
    <property type="entry name" value="AAA+_ATPase"/>
</dbReference>
<dbReference type="InterPro" id="IPR013525">
    <property type="entry name" value="ABC2_TM"/>
</dbReference>
<dbReference type="InterPro" id="IPR029481">
    <property type="entry name" value="ABC_trans_N"/>
</dbReference>
<dbReference type="InterPro" id="IPR003439">
    <property type="entry name" value="ABC_transporter-like_ATP-bd"/>
</dbReference>
<dbReference type="InterPro" id="IPR043926">
    <property type="entry name" value="ABCG_dom"/>
</dbReference>
<dbReference type="InterPro" id="IPR034003">
    <property type="entry name" value="ABCG_PDR_2"/>
</dbReference>
<dbReference type="InterPro" id="IPR027417">
    <property type="entry name" value="P-loop_NTPase"/>
</dbReference>
<dbReference type="InterPro" id="IPR013581">
    <property type="entry name" value="PDR_assoc"/>
</dbReference>
<dbReference type="PANTHER" id="PTHR48040:SF35">
    <property type="entry name" value="ABC TRANSPORTER G FAMILY MEMBER 39-LIKE"/>
    <property type="match status" value="1"/>
</dbReference>
<dbReference type="PANTHER" id="PTHR48040">
    <property type="entry name" value="PLEIOTROPIC DRUG RESISTANCE PROTEIN 1-LIKE ISOFORM X1"/>
    <property type="match status" value="1"/>
</dbReference>
<dbReference type="Pfam" id="PF01061">
    <property type="entry name" value="ABC2_membrane"/>
    <property type="match status" value="2"/>
</dbReference>
<dbReference type="Pfam" id="PF19055">
    <property type="entry name" value="ABC2_membrane_7"/>
    <property type="match status" value="1"/>
</dbReference>
<dbReference type="Pfam" id="PF00005">
    <property type="entry name" value="ABC_tran"/>
    <property type="match status" value="2"/>
</dbReference>
<dbReference type="Pfam" id="PF14510">
    <property type="entry name" value="ABC_trans_N"/>
    <property type="match status" value="1"/>
</dbReference>
<dbReference type="Pfam" id="PF08370">
    <property type="entry name" value="PDR_assoc"/>
    <property type="match status" value="1"/>
</dbReference>
<dbReference type="SMART" id="SM00382">
    <property type="entry name" value="AAA"/>
    <property type="match status" value="2"/>
</dbReference>
<dbReference type="SUPFAM" id="SSF52540">
    <property type="entry name" value="P-loop containing nucleoside triphosphate hydrolases"/>
    <property type="match status" value="2"/>
</dbReference>
<dbReference type="PROSITE" id="PS50893">
    <property type="entry name" value="ABC_TRANSPORTER_2"/>
    <property type="match status" value="2"/>
</dbReference>
<keyword id="KW-0067">ATP-binding</keyword>
<keyword id="KW-0472">Membrane</keyword>
<keyword id="KW-0547">Nucleotide-binding</keyword>
<keyword id="KW-1185">Reference proteome</keyword>
<keyword id="KW-0677">Repeat</keyword>
<keyword id="KW-0812">Transmembrane</keyword>
<keyword id="KW-1133">Transmembrane helix</keyword>
<keyword id="KW-0813">Transport</keyword>
<feature type="chain" id="PRO_0000433456" description="ABC transporter G family member 46">
    <location>
        <begin position="1"/>
        <end position="1440"/>
    </location>
</feature>
<feature type="transmembrane region" description="Helical" evidence="2">
    <location>
        <begin position="516"/>
        <end position="536"/>
    </location>
</feature>
<feature type="transmembrane region" description="Helical" evidence="2">
    <location>
        <begin position="561"/>
        <end position="581"/>
    </location>
</feature>
<feature type="transmembrane region" description="Helical" evidence="2">
    <location>
        <begin position="603"/>
        <end position="623"/>
    </location>
</feature>
<feature type="transmembrane region" description="Helical" evidence="2">
    <location>
        <begin position="634"/>
        <end position="654"/>
    </location>
</feature>
<feature type="transmembrane region" description="Helical" evidence="2">
    <location>
        <begin position="659"/>
        <end position="679"/>
    </location>
</feature>
<feature type="transmembrane region" description="Helical" evidence="2">
    <location>
        <begin position="688"/>
        <end position="708"/>
    </location>
</feature>
<feature type="transmembrane region" description="Helical" evidence="2">
    <location>
        <begin position="745"/>
        <end position="765"/>
    </location>
</feature>
<feature type="transmembrane region" description="Helical" evidence="2">
    <location>
        <begin position="1188"/>
        <end position="1208"/>
    </location>
</feature>
<feature type="transmembrane region" description="Helical" evidence="7">
    <location>
        <begin position="1219"/>
        <end position="1236"/>
    </location>
</feature>
<feature type="transmembrane region" description="Helical" evidence="2">
    <location>
        <begin position="1271"/>
        <end position="1291"/>
    </location>
</feature>
<feature type="transmembrane region" description="Helical" evidence="2">
    <location>
        <begin position="1302"/>
        <end position="1322"/>
    </location>
</feature>
<feature type="transmembrane region" description="Helical" evidence="2">
    <location>
        <begin position="1332"/>
        <end position="1352"/>
    </location>
</feature>
<feature type="transmembrane region" description="Helical" evidence="2">
    <location>
        <begin position="1357"/>
        <end position="1377"/>
    </location>
</feature>
<feature type="transmembrane region" description="Helical" evidence="2">
    <location>
        <begin position="1410"/>
        <end position="1430"/>
    </location>
</feature>
<feature type="domain" description="ABC transporter 1" evidence="3">
    <location>
        <begin position="137"/>
        <end position="419"/>
    </location>
</feature>
<feature type="domain" description="ABC transmembrane type-2 1" evidence="7">
    <location>
        <begin position="497"/>
        <end position="710"/>
    </location>
</feature>
<feature type="domain" description="ABC transporter 2" evidence="3">
    <location>
        <begin position="843"/>
        <end position="1095"/>
    </location>
</feature>
<feature type="domain" description="ABC transmembrane type-2 2" evidence="7">
    <location>
        <begin position="1168"/>
        <end position="1382"/>
    </location>
</feature>
<feature type="region of interest" description="Disordered" evidence="4">
    <location>
        <begin position="1"/>
        <end position="42"/>
    </location>
</feature>
<feature type="region of interest" description="Disordered" evidence="4">
    <location>
        <begin position="794"/>
        <end position="829"/>
    </location>
</feature>
<feature type="compositionally biased region" description="Low complexity" evidence="4">
    <location>
        <begin position="21"/>
        <end position="32"/>
    </location>
</feature>
<feature type="compositionally biased region" description="Polar residues" evidence="4">
    <location>
        <begin position="812"/>
        <end position="829"/>
    </location>
</feature>
<feature type="binding site" evidence="3">
    <location>
        <begin position="170"/>
        <end position="177"/>
    </location>
    <ligand>
        <name>ATP</name>
        <dbReference type="ChEBI" id="CHEBI:30616"/>
        <label>1</label>
    </ligand>
</feature>
<feature type="binding site" evidence="3">
    <location>
        <begin position="888"/>
        <end position="895"/>
    </location>
    <ligand>
        <name>ATP</name>
        <dbReference type="ChEBI" id="CHEBI:30616"/>
        <label>2</label>
    </ligand>
</feature>
<evidence type="ECO:0000250" key="1"/>
<evidence type="ECO:0000255" key="2"/>
<evidence type="ECO:0000255" key="3">
    <source>
        <dbReference type="PROSITE-ProRule" id="PRU00434"/>
    </source>
</evidence>
<evidence type="ECO:0000256" key="4">
    <source>
        <dbReference type="SAM" id="MobiDB-lite"/>
    </source>
</evidence>
<evidence type="ECO:0000303" key="5">
    <source>
    </source>
</evidence>
<evidence type="ECO:0000303" key="6">
    <source>
    </source>
</evidence>
<evidence type="ECO:0000305" key="7"/>
<evidence type="ECO:0000312" key="8">
    <source>
        <dbReference type="EMBL" id="BAH94510.1"/>
    </source>
</evidence>
<evidence type="ECO:0000312" key="9">
    <source>
        <dbReference type="EMBL" id="EEE69493.1"/>
    </source>
</evidence>
<reference key="1">
    <citation type="journal article" date="2005" name="Nature">
        <title>The map-based sequence of the rice genome.</title>
        <authorList>
            <consortium name="International rice genome sequencing project (IRGSP)"/>
        </authorList>
    </citation>
    <scope>NUCLEOTIDE SEQUENCE [LARGE SCALE GENOMIC DNA]</scope>
    <source>
        <strain>cv. Nipponbare</strain>
    </source>
</reference>
<reference key="2">
    <citation type="journal article" date="2008" name="Nucleic Acids Res.">
        <title>The rice annotation project database (RAP-DB): 2008 update.</title>
        <authorList>
            <consortium name="The rice annotation project (RAP)"/>
        </authorList>
    </citation>
    <scope>GENOME REANNOTATION</scope>
    <source>
        <strain>cv. Nipponbare</strain>
    </source>
</reference>
<reference key="3">
    <citation type="journal article" date="2013" name="Rice">
        <title>Improvement of the Oryza sativa Nipponbare reference genome using next generation sequence and optical map data.</title>
        <authorList>
            <person name="Kawahara Y."/>
            <person name="de la Bastide M."/>
            <person name="Hamilton J.P."/>
            <person name="Kanamori H."/>
            <person name="McCombie W.R."/>
            <person name="Ouyang S."/>
            <person name="Schwartz D.C."/>
            <person name="Tanaka T."/>
            <person name="Wu J."/>
            <person name="Zhou S."/>
            <person name="Childs K.L."/>
            <person name="Davidson R.M."/>
            <person name="Lin H."/>
            <person name="Quesada-Ocampo L."/>
            <person name="Vaillancourt B."/>
            <person name="Sakai H."/>
            <person name="Lee S.S."/>
            <person name="Kim J."/>
            <person name="Numa H."/>
            <person name="Itoh T."/>
            <person name="Buell C.R."/>
            <person name="Matsumoto T."/>
        </authorList>
    </citation>
    <scope>GENOME REANNOTATION</scope>
    <source>
        <strain>cv. Nipponbare</strain>
    </source>
</reference>
<reference key="4">
    <citation type="journal article" date="2005" name="PLoS Biol.">
        <title>The genomes of Oryza sativa: a history of duplications.</title>
        <authorList>
            <person name="Yu J."/>
            <person name="Wang J."/>
            <person name="Lin W."/>
            <person name="Li S."/>
            <person name="Li H."/>
            <person name="Zhou J."/>
            <person name="Ni P."/>
            <person name="Dong W."/>
            <person name="Hu S."/>
            <person name="Zeng C."/>
            <person name="Zhang J."/>
            <person name="Zhang Y."/>
            <person name="Li R."/>
            <person name="Xu Z."/>
            <person name="Li S."/>
            <person name="Li X."/>
            <person name="Zheng H."/>
            <person name="Cong L."/>
            <person name="Lin L."/>
            <person name="Yin J."/>
            <person name="Geng J."/>
            <person name="Li G."/>
            <person name="Shi J."/>
            <person name="Liu J."/>
            <person name="Lv H."/>
            <person name="Li J."/>
            <person name="Wang J."/>
            <person name="Deng Y."/>
            <person name="Ran L."/>
            <person name="Shi X."/>
            <person name="Wang X."/>
            <person name="Wu Q."/>
            <person name="Li C."/>
            <person name="Ren X."/>
            <person name="Wang J."/>
            <person name="Wang X."/>
            <person name="Li D."/>
            <person name="Liu D."/>
            <person name="Zhang X."/>
            <person name="Ji Z."/>
            <person name="Zhao W."/>
            <person name="Sun Y."/>
            <person name="Zhang Z."/>
            <person name="Bao J."/>
            <person name="Han Y."/>
            <person name="Dong L."/>
            <person name="Ji J."/>
            <person name="Chen P."/>
            <person name="Wu S."/>
            <person name="Liu J."/>
            <person name="Xiao Y."/>
            <person name="Bu D."/>
            <person name="Tan J."/>
            <person name="Yang L."/>
            <person name="Ye C."/>
            <person name="Zhang J."/>
            <person name="Xu J."/>
            <person name="Zhou Y."/>
            <person name="Yu Y."/>
            <person name="Zhang B."/>
            <person name="Zhuang S."/>
            <person name="Wei H."/>
            <person name="Liu B."/>
            <person name="Lei M."/>
            <person name="Yu H."/>
            <person name="Li Y."/>
            <person name="Xu H."/>
            <person name="Wei S."/>
            <person name="He X."/>
            <person name="Fang L."/>
            <person name="Zhang Z."/>
            <person name="Zhang Y."/>
            <person name="Huang X."/>
            <person name="Su Z."/>
            <person name="Tong W."/>
            <person name="Li J."/>
            <person name="Tong Z."/>
            <person name="Li S."/>
            <person name="Ye J."/>
            <person name="Wang L."/>
            <person name="Fang L."/>
            <person name="Lei T."/>
            <person name="Chen C.-S."/>
            <person name="Chen H.-C."/>
            <person name="Xu Z."/>
            <person name="Li H."/>
            <person name="Huang H."/>
            <person name="Zhang F."/>
            <person name="Xu H."/>
            <person name="Li N."/>
            <person name="Zhao C."/>
            <person name="Li S."/>
            <person name="Dong L."/>
            <person name="Huang Y."/>
            <person name="Li L."/>
            <person name="Xi Y."/>
            <person name="Qi Q."/>
            <person name="Li W."/>
            <person name="Zhang B."/>
            <person name="Hu W."/>
            <person name="Zhang Y."/>
            <person name="Tian X."/>
            <person name="Jiao Y."/>
            <person name="Liang X."/>
            <person name="Jin J."/>
            <person name="Gao L."/>
            <person name="Zheng W."/>
            <person name="Hao B."/>
            <person name="Liu S.-M."/>
            <person name="Wang W."/>
            <person name="Yuan L."/>
            <person name="Cao M."/>
            <person name="McDermott J."/>
            <person name="Samudrala R."/>
            <person name="Wang J."/>
            <person name="Wong G.K.-S."/>
            <person name="Yang H."/>
        </authorList>
    </citation>
    <scope>NUCLEOTIDE SEQUENCE [LARGE SCALE GENOMIC DNA]</scope>
    <source>
        <strain>cv. Nipponbare</strain>
    </source>
</reference>
<reference key="5">
    <citation type="journal article" date="2006" name="FEBS Lett.">
        <title>Organization and function of the plant pleiotropic drug resistance ABC transporter family.</title>
        <authorList>
            <person name="Crouzet J."/>
            <person name="Trombik T."/>
            <person name="Fraysse A.S."/>
            <person name="Boutry M."/>
        </authorList>
    </citation>
    <scope>GENE FAMILY</scope>
    <scope>NOMENCLATURE</scope>
</reference>
<reference key="6">
    <citation type="journal article" date="2008" name="Trends Plant Sci.">
        <title>Plant ABC proteins - a unified nomenclature and updated inventory.</title>
        <authorList>
            <person name="Verrier P.J."/>
            <person name="Bird D."/>
            <person name="Burla B."/>
            <person name="Dassa E."/>
            <person name="Forestier C."/>
            <person name="Geisler M."/>
            <person name="Klein M."/>
            <person name="Kolukisaoglu H.U."/>
            <person name="Lee Y."/>
            <person name="Martinoia E."/>
            <person name="Murphy A."/>
            <person name="Rea P.A."/>
            <person name="Samuels L."/>
            <person name="Schulz B."/>
            <person name="Spalding E.J."/>
            <person name="Yazaki K."/>
            <person name="Theodoulou F.L."/>
        </authorList>
    </citation>
    <scope>GENE FAMILY</scope>
    <scope>NOMENCLATURE</scope>
</reference>
<comment type="function">
    <text evidence="1">May be a general defense protein.</text>
</comment>
<comment type="subcellular location">
    <subcellularLocation>
        <location evidence="2">Membrane</location>
        <topology evidence="2">Multi-pass membrane protein</topology>
    </subcellularLocation>
</comment>
<comment type="similarity">
    <text evidence="7">Belongs to the ABC transporter superfamily. ABCG family. PDR (TC 3.A.1.205) subfamily.</text>
</comment>
<comment type="sequence caution" evidence="7">
    <conflict type="erroneous gene model prediction">
        <sequence resource="EMBL-CDS" id="BAH94510"/>
    </conflict>
</comment>
<comment type="sequence caution" evidence="7">
    <conflict type="erroneous gene model prediction">
        <sequence resource="EMBL-CDS" id="EEE69493"/>
    </conflict>
</comment>
<organism>
    <name type="scientific">Oryza sativa subsp. japonica</name>
    <name type="common">Rice</name>
    <dbReference type="NCBI Taxonomy" id="39947"/>
    <lineage>
        <taxon>Eukaryota</taxon>
        <taxon>Viridiplantae</taxon>
        <taxon>Streptophyta</taxon>
        <taxon>Embryophyta</taxon>
        <taxon>Tracheophyta</taxon>
        <taxon>Spermatophyta</taxon>
        <taxon>Magnoliopsida</taxon>
        <taxon>Liliopsida</taxon>
        <taxon>Poales</taxon>
        <taxon>Poaceae</taxon>
        <taxon>BOP clade</taxon>
        <taxon>Oryzoideae</taxon>
        <taxon>Oryzeae</taxon>
        <taxon>Oryzinae</taxon>
        <taxon>Oryza</taxon>
        <taxon>Oryza sativa</taxon>
    </lineage>
</organism>
<protein>
    <recommendedName>
        <fullName evidence="6">ABC transporter G family member 46</fullName>
        <shortName evidence="6">OsABCG46</shortName>
    </recommendedName>
    <alternativeName>
        <fullName evidence="5">Pleiotropic drug resistance protein 21</fullName>
        <shortName evidence="5">OsPDR21</shortName>
    </alternativeName>
</protein>
<accession>C7J6G6</accession>
<accession>B9G2Z6</accession>
<proteinExistence type="inferred from homology"/>
<sequence>MDDDVDAGEIYAVDRQREEGSASAAAFSRSPSTGRVDDDDDDLLTYGRSARRMAALPAPAMPEGTELRRPVGGDVVGDDDYLRFLYKFKELFDRVGIKLPTIEVRYKNLNVEAESYVGSRGLPTILNTYANILKGLANTLHMTTRSKQKISVLHNASGIIKPHRMTLLLGSPGSGKTSLLLALAGTLPSTVKVSGMITYNGHTMDKFIPQRSAAYVSQHDLHMAELTVRETINFSAKCQGVGHHYDLFLELLRREEEENITPDPETDIYLKAATTGEEKAEIVTNHILKILRLDICADTIVGDNMLRGISGGQKRCLDAHTAPNVDSAAEMLVTLGRALFMDEISNGLDSSTTFQIVNTIQQTIHVLGGTAVIALLQPAPETYELFDDIILLSDGQVVYSGPRDHVLEFFKSLGFKCLERIGVADFLQEVTSRKDQKQYWIHGDDTYRYIPVTVIAEAFQCFHVGQAIRSELAIPFDNSKSHIAALKTSKHGVNLKKILKANIDREILLLKRKSFLYIFNALQLTLVAIIAMSVFIHTNMHHDSIENGRMYMGVQFFGTLAIMFKGLAEMGAALANLPVFFKQRDLLFYPAWTYSLPSWIIKTPISFLNTIIWVSITYYVIGFDPNIERCFRQFLVLFVMSEAICGLFRFIAALTRHPVVASTVSEFCILIVMVSSGFILSRDEVKKWLIWEYWTSPLMYALNALAVNEFLSPSWNEALPGFREPLGRLVLESRGVFPEAKWYWIGLGALLGYVLLFNILYTICLSILTLLKRNVREMSQETLQIKLENLTGYDQEPSSGGRVTNDKRYTEGGNNDEATSSNANHNSSPARKGSILPFVPVYMTFEDIRYSIDMPKALKVQGMAGSRLELLKDLSGSFRPGVLTALMGISGAGKTTLLDVLAGRKTSGHIHGNITVSGYPKKQETFSRVSGYCEQNDIHSPNLTVYESLMFSAWLRLPAEIDSMARKRFIDEFMELVELFPLKDALVGLLGLSGLSTEQRKRLTIAVELVANPSIIFMDEPTSGLDARAAAIVMRTVRNIVDMGRTVVCTIHQPSIDIFESFDELFLMKRGGEAIYVGPLGQHSCELIKYFESIEGVRKIKHGYNPSTWMLEVTCTLQEQITGVNFTQVYKNSELYRRNKNLIKELSTPHDGSSDLLFPTKYSQTFVIQCLACLWKQRLSYWRNPPYIAVNFFFTVVIALLFGTMFWGVGRKRQSQQALLSAMGSMYSTCFTLGVQNSSSVQPVVNIERTVFYRERASHMYSPLPYALGQVVVELPYIFLQTLIYGVIVYSMMGYEWTCTKFFWYMFFMYFTLSYFTFYGMMAAGLTPNYTMSSIVSTTFYAIWHLFSGFLIPKTRIPIWWRWYYWICPVAWTINGLVTSQFGDVDDKFDNGVRVSDFVESYFGYNLDLLWVAAMAVVSFAILFAILFGFSLKLFNFQKR</sequence>